<sequence length="602" mass="65802">MSERRRSAVALSSRAHAFSVEALIGSNKKRKLRDWEEKGLDLSMEALSPAGPLGDTDDPATHGLEPHPDSEQSTGSDSEVLTERTSCSFSTHTDLASGAAGPVPAAMSSMEEIQVELQCADLWKRFHDIGTEMIITKAGRRMFPAMRVKITGLDPHQQYYIAMDIVPVDNKRYRYVYHSSKWMVAGNADSPVPPRVYIHPDSLASGDTWMRQVVSFDKLKLTNNELDDQGHIILHSMHKYQPRVHVIRKDFSSDLSPTKPVPVGDGVKTFNFPETVFTTVTAYQNQQITRLKIDRNPFAKGFRDSGRNRTGLEAIMETYAFWRPPVRTLTFEDFTTMQKQQGGSTGTSPTTSSTGTPSPSASSHLLSPSCSPPTFHLAPNTFNVGCRESQLCNLNLSDYPPCARSNMAALQSYPGLSDSGYNRLQSGTASATQPSETFMPQRTPSLISGIPTPPSLPSNSKMEAYGGQLGSFPTSQFQYVMQAGNAASSSSSPHMFGGSHMQQSSYNAFSLHNPYNLYGYNFPTSPRLAASPEKLSASQSTLLCSSPSNGAFGERQYLPTGMEHSMHMISPSTNNQQATNTCDGRQYGAVPGSASQMSVHMV</sequence>
<comment type="function">
    <text>Probable transcriptional regulator involved in the development of the skeleton of the limb, vertebral column and head. Acts by controlling the number of mesenchymal precursor cells and chondrocytes.</text>
</comment>
<comment type="subunit">
    <text evidence="5">Can form a heterodimer with TBX18.</text>
</comment>
<comment type="subcellular location">
    <subcellularLocation>
        <location evidence="2">Nucleus</location>
    </subcellularLocation>
</comment>
<comment type="developmental stage">
    <text evidence="4">Expressed during limb development, first in the mesenchyme of the early limb bud, then during early endochondral bone development in prehypertrophic chondrocytes of cartilaginous templates. Expression is also found in mesenchymal precursor cells and prehypertrophic chondrocytes, respectively, during development of skeletal elements of the vertebral column and the head.</text>
</comment>
<comment type="disruption phenotype">
    <text evidence="4">Mice show a general reduction of bone size and changes of bone shape. In the forelimb skeleton, the scapula lacks the central region of the blade. Cartilaginous templates are already reduced in size and show a transient delay in ossification in mutant embryos. Mice show a significantly reduced proliferation of prehypertrophic chondrocytes as well as of mesenchymal precursor cells.</text>
</comment>
<feature type="chain" id="PRO_0000184445" description="T-box transcription factor TBX15">
    <location>
        <begin position="1"/>
        <end position="602"/>
    </location>
</feature>
<feature type="DNA-binding region" description="T-box" evidence="2">
    <location>
        <begin position="122"/>
        <end position="304"/>
    </location>
</feature>
<feature type="region of interest" description="Disordered" evidence="3">
    <location>
        <begin position="43"/>
        <end position="95"/>
    </location>
</feature>
<feature type="region of interest" description="Disordered" evidence="3">
    <location>
        <begin position="338"/>
        <end position="369"/>
    </location>
</feature>
<feature type="region of interest" description="Disordered" evidence="3">
    <location>
        <begin position="425"/>
        <end position="444"/>
    </location>
</feature>
<feature type="compositionally biased region" description="Polar residues" evidence="3">
    <location>
        <begin position="71"/>
        <end position="94"/>
    </location>
</feature>
<feature type="compositionally biased region" description="Low complexity" evidence="3">
    <location>
        <begin position="346"/>
        <end position="369"/>
    </location>
</feature>
<feature type="modified residue" description="Phosphothreonine" evidence="1">
    <location>
        <position position="330"/>
    </location>
</feature>
<feature type="sequence conflict" description="In Ref. 1; AAC32316." evidence="6" ref="1">
    <original>AGP</original>
    <variation>RAT</variation>
    <location>
        <begin position="100"/>
        <end position="102"/>
    </location>
</feature>
<feature type="sequence conflict" description="In Ref. 1; AAC32316." evidence="6" ref="1">
    <original>R</original>
    <variation>G</variation>
    <location>
        <position position="309"/>
    </location>
</feature>
<name>TBX15_MOUSE</name>
<organism>
    <name type="scientific">Mus musculus</name>
    <name type="common">Mouse</name>
    <dbReference type="NCBI Taxonomy" id="10090"/>
    <lineage>
        <taxon>Eukaryota</taxon>
        <taxon>Metazoa</taxon>
        <taxon>Chordata</taxon>
        <taxon>Craniata</taxon>
        <taxon>Vertebrata</taxon>
        <taxon>Euteleostomi</taxon>
        <taxon>Mammalia</taxon>
        <taxon>Eutheria</taxon>
        <taxon>Euarchontoglires</taxon>
        <taxon>Glires</taxon>
        <taxon>Rodentia</taxon>
        <taxon>Myomorpha</taxon>
        <taxon>Muroidea</taxon>
        <taxon>Muridae</taxon>
        <taxon>Murinae</taxon>
        <taxon>Mus</taxon>
        <taxon>Mus</taxon>
    </lineage>
</organism>
<evidence type="ECO:0000250" key="1">
    <source>
        <dbReference type="UniProtKB" id="Q96SF7"/>
    </source>
</evidence>
<evidence type="ECO:0000255" key="2">
    <source>
        <dbReference type="PROSITE-ProRule" id="PRU00201"/>
    </source>
</evidence>
<evidence type="ECO:0000256" key="3">
    <source>
        <dbReference type="SAM" id="MobiDB-lite"/>
    </source>
</evidence>
<evidence type="ECO:0000269" key="4">
    <source>
    </source>
</evidence>
<evidence type="ECO:0000269" key="5">
    <source>
    </source>
</evidence>
<evidence type="ECO:0000305" key="6"/>
<accession>O70306</accession>
<accession>O54840</accession>
<accession>Q5GBG1</accession>
<keyword id="KW-0238">DNA-binding</keyword>
<keyword id="KW-0539">Nucleus</keyword>
<keyword id="KW-0597">Phosphoprotein</keyword>
<keyword id="KW-1185">Reference proteome</keyword>
<keyword id="KW-0804">Transcription</keyword>
<keyword id="KW-0805">Transcription regulation</keyword>
<dbReference type="EMBL" id="AF041822">
    <property type="protein sequence ID" value="AAC32316.1"/>
    <property type="molecule type" value="mRNA"/>
</dbReference>
<dbReference type="EMBL" id="AY662679">
    <property type="protein sequence ID" value="AAV80417.1"/>
    <property type="molecule type" value="mRNA"/>
</dbReference>
<dbReference type="EMBL" id="AK132578">
    <property type="protein sequence ID" value="BAE21240.1"/>
    <property type="molecule type" value="mRNA"/>
</dbReference>
<dbReference type="EMBL" id="AC080018">
    <property type="status" value="NOT_ANNOTATED_CDS"/>
    <property type="molecule type" value="Genomic_DNA"/>
</dbReference>
<dbReference type="EMBL" id="AL606747">
    <property type="status" value="NOT_ANNOTATED_CDS"/>
    <property type="molecule type" value="Genomic_DNA"/>
</dbReference>
<dbReference type="EMBL" id="AF013282">
    <property type="protein sequence ID" value="AAC40115.1"/>
    <property type="molecule type" value="mRNA"/>
</dbReference>
<dbReference type="CCDS" id="CCDS17673.1"/>
<dbReference type="RefSeq" id="NP_033349.2">
    <property type="nucleotide sequence ID" value="NM_009323.3"/>
</dbReference>
<dbReference type="SMR" id="O70306"/>
<dbReference type="BioGRID" id="203986">
    <property type="interactions" value="1"/>
</dbReference>
<dbReference type="FunCoup" id="O70306">
    <property type="interactions" value="1075"/>
</dbReference>
<dbReference type="IntAct" id="O70306">
    <property type="interactions" value="1"/>
</dbReference>
<dbReference type="STRING" id="10090.ENSMUSP00000029462"/>
<dbReference type="GlyGen" id="O70306">
    <property type="glycosylation" value="1 site"/>
</dbReference>
<dbReference type="iPTMnet" id="O70306"/>
<dbReference type="PhosphoSitePlus" id="O70306"/>
<dbReference type="jPOST" id="O70306"/>
<dbReference type="PaxDb" id="10090-ENSMUSP00000029462"/>
<dbReference type="ProteomicsDB" id="263256"/>
<dbReference type="Pumba" id="O70306"/>
<dbReference type="Antibodypedia" id="20199">
    <property type="antibodies" value="143 antibodies from 26 providers"/>
</dbReference>
<dbReference type="DNASU" id="21384"/>
<dbReference type="Ensembl" id="ENSMUST00000029462.10">
    <property type="protein sequence ID" value="ENSMUSP00000029462.6"/>
    <property type="gene ID" value="ENSMUSG00000027868.12"/>
</dbReference>
<dbReference type="GeneID" id="21384"/>
<dbReference type="KEGG" id="mmu:21384"/>
<dbReference type="UCSC" id="uc008qql.1">
    <property type="organism name" value="mouse"/>
</dbReference>
<dbReference type="AGR" id="MGI:1277234"/>
<dbReference type="CTD" id="6913"/>
<dbReference type="MGI" id="MGI:1277234">
    <property type="gene designation" value="Tbx15"/>
</dbReference>
<dbReference type="VEuPathDB" id="HostDB:ENSMUSG00000027868"/>
<dbReference type="eggNOG" id="KOG3586">
    <property type="taxonomic scope" value="Eukaryota"/>
</dbReference>
<dbReference type="GeneTree" id="ENSGT00940000159013"/>
<dbReference type="HOGENOM" id="CLU_030727_0_0_1"/>
<dbReference type="InParanoid" id="O70306"/>
<dbReference type="OMA" id="QTANTCD"/>
<dbReference type="OrthoDB" id="7442607at2759"/>
<dbReference type="PhylomeDB" id="O70306"/>
<dbReference type="TreeFam" id="TF106341"/>
<dbReference type="BioGRID-ORCS" id="21384">
    <property type="hits" value="0 hits in 79 CRISPR screens"/>
</dbReference>
<dbReference type="ChiTaRS" id="Tbx15">
    <property type="organism name" value="mouse"/>
</dbReference>
<dbReference type="PRO" id="PR:O70306"/>
<dbReference type="Proteomes" id="UP000000589">
    <property type="component" value="Chromosome 3"/>
</dbReference>
<dbReference type="RNAct" id="O70306">
    <property type="molecule type" value="protein"/>
</dbReference>
<dbReference type="Bgee" id="ENSMUSG00000027868">
    <property type="expression patterns" value="Expressed in hindlimb stylopod muscle and 139 other cell types or tissues"/>
</dbReference>
<dbReference type="ExpressionAtlas" id="O70306">
    <property type="expression patterns" value="baseline and differential"/>
</dbReference>
<dbReference type="GO" id="GO:0005634">
    <property type="term" value="C:nucleus"/>
    <property type="evidence" value="ECO:0000314"/>
    <property type="project" value="BHF-UCL"/>
</dbReference>
<dbReference type="GO" id="GO:0090571">
    <property type="term" value="C:RNA polymerase II transcription repressor complex"/>
    <property type="evidence" value="ECO:0000314"/>
    <property type="project" value="BHF-UCL"/>
</dbReference>
<dbReference type="GO" id="GO:0001227">
    <property type="term" value="F:DNA-binding transcription repressor activity, RNA polymerase II-specific"/>
    <property type="evidence" value="ECO:0000314"/>
    <property type="project" value="BHF-UCL"/>
</dbReference>
<dbReference type="GO" id="GO:0042803">
    <property type="term" value="F:protein homodimerization activity"/>
    <property type="evidence" value="ECO:0000353"/>
    <property type="project" value="BHF-UCL"/>
</dbReference>
<dbReference type="GO" id="GO:0000978">
    <property type="term" value="F:RNA polymerase II cis-regulatory region sequence-specific DNA binding"/>
    <property type="evidence" value="ECO:0000314"/>
    <property type="project" value="NTNU_SB"/>
</dbReference>
<dbReference type="GO" id="GO:0048701">
    <property type="term" value="P:embryonic cranial skeleton morphogenesis"/>
    <property type="evidence" value="ECO:0000315"/>
    <property type="project" value="MGI"/>
</dbReference>
<dbReference type="GO" id="GO:0048704">
    <property type="term" value="P:embryonic skeletal system morphogenesis"/>
    <property type="evidence" value="ECO:0000315"/>
    <property type="project" value="MGI"/>
</dbReference>
<dbReference type="GO" id="GO:0000122">
    <property type="term" value="P:negative regulation of transcription by RNA polymerase II"/>
    <property type="evidence" value="ECO:0000314"/>
    <property type="project" value="BHF-UCL"/>
</dbReference>
<dbReference type="GO" id="GO:0045893">
    <property type="term" value="P:positive regulation of DNA-templated transcription"/>
    <property type="evidence" value="ECO:0007669"/>
    <property type="project" value="InterPro"/>
</dbReference>
<dbReference type="CDD" id="cd20198">
    <property type="entry name" value="T-box_TBX15-like"/>
    <property type="match status" value="1"/>
</dbReference>
<dbReference type="FunFam" id="2.60.40.820:FF:000001">
    <property type="entry name" value="T-box transcription factor TBX18"/>
    <property type="match status" value="1"/>
</dbReference>
<dbReference type="Gene3D" id="2.60.40.820">
    <property type="entry name" value="Transcription factor, T-box"/>
    <property type="match status" value="1"/>
</dbReference>
<dbReference type="InterPro" id="IPR008967">
    <property type="entry name" value="p53-like_TF_DNA-bd_sf"/>
</dbReference>
<dbReference type="InterPro" id="IPR046360">
    <property type="entry name" value="T-box_DNA-bd"/>
</dbReference>
<dbReference type="InterPro" id="IPR036960">
    <property type="entry name" value="T-box_sf"/>
</dbReference>
<dbReference type="InterPro" id="IPR001699">
    <property type="entry name" value="TF_T-box"/>
</dbReference>
<dbReference type="InterPro" id="IPR018186">
    <property type="entry name" value="TF_T-box_CS"/>
</dbReference>
<dbReference type="PANTHER" id="PTHR11267">
    <property type="entry name" value="T-BOX PROTEIN-RELATED"/>
    <property type="match status" value="1"/>
</dbReference>
<dbReference type="PANTHER" id="PTHR11267:SF98">
    <property type="entry name" value="T-BOX TRANSCRIPTION FACTOR TBX15"/>
    <property type="match status" value="1"/>
</dbReference>
<dbReference type="Pfam" id="PF00907">
    <property type="entry name" value="T-box"/>
    <property type="match status" value="1"/>
</dbReference>
<dbReference type="PRINTS" id="PR00937">
    <property type="entry name" value="TBOX"/>
</dbReference>
<dbReference type="SMART" id="SM00425">
    <property type="entry name" value="TBOX"/>
    <property type="match status" value="1"/>
</dbReference>
<dbReference type="SUPFAM" id="SSF49417">
    <property type="entry name" value="p53-like transcription factors"/>
    <property type="match status" value="1"/>
</dbReference>
<dbReference type="PROSITE" id="PS01283">
    <property type="entry name" value="TBOX_1"/>
    <property type="match status" value="1"/>
</dbReference>
<dbReference type="PROSITE" id="PS01264">
    <property type="entry name" value="TBOX_2"/>
    <property type="match status" value="1"/>
</dbReference>
<dbReference type="PROSITE" id="PS50252">
    <property type="entry name" value="TBOX_3"/>
    <property type="match status" value="1"/>
</dbReference>
<protein>
    <recommendedName>
        <fullName>T-box transcription factor TBX15</fullName>
        <shortName>T-box protein 15</shortName>
    </recommendedName>
    <alternativeName>
        <fullName>MmTBx8</fullName>
    </alternativeName>
    <alternativeName>
        <fullName>T-box transcription factor TBX14</fullName>
        <shortName>T-box protein 14</shortName>
    </alternativeName>
</protein>
<reference key="1">
    <citation type="journal article" date="1998" name="Genomics">
        <title>Cloning, mapping, and expression analysis of TBX15, a new member of the T-Box gene family.</title>
        <authorList>
            <person name="Agulnik S.I."/>
            <person name="Papaioannou V.E."/>
            <person name="Silver L.M."/>
        </authorList>
    </citation>
    <scope>NUCLEOTIDE SEQUENCE [MRNA]</scope>
</reference>
<reference key="2">
    <citation type="journal article" date="2005" name="Mech. Dev.">
        <title>The T-box transcription factor Tbx15 is required for skeletal development.</title>
        <authorList>
            <person name="Singh M.K."/>
            <person name="Petry M."/>
            <person name="Haenig B."/>
            <person name="Lescher B."/>
            <person name="Leitges M."/>
            <person name="Kispert A."/>
        </authorList>
    </citation>
    <scope>NUCLEOTIDE SEQUENCE [MRNA]</scope>
    <scope>DISRUPTION PHENOTYPE</scope>
    <scope>DEVELOPMENTAL STAGE</scope>
</reference>
<reference key="3">
    <citation type="journal article" date="2005" name="Science">
        <title>The transcriptional landscape of the mammalian genome.</title>
        <authorList>
            <person name="Carninci P."/>
            <person name="Kasukawa T."/>
            <person name="Katayama S."/>
            <person name="Gough J."/>
            <person name="Frith M.C."/>
            <person name="Maeda N."/>
            <person name="Oyama R."/>
            <person name="Ravasi T."/>
            <person name="Lenhard B."/>
            <person name="Wells C."/>
            <person name="Kodzius R."/>
            <person name="Shimokawa K."/>
            <person name="Bajic V.B."/>
            <person name="Brenner S.E."/>
            <person name="Batalov S."/>
            <person name="Forrest A.R."/>
            <person name="Zavolan M."/>
            <person name="Davis M.J."/>
            <person name="Wilming L.G."/>
            <person name="Aidinis V."/>
            <person name="Allen J.E."/>
            <person name="Ambesi-Impiombato A."/>
            <person name="Apweiler R."/>
            <person name="Aturaliya R.N."/>
            <person name="Bailey T.L."/>
            <person name="Bansal M."/>
            <person name="Baxter L."/>
            <person name="Beisel K.W."/>
            <person name="Bersano T."/>
            <person name="Bono H."/>
            <person name="Chalk A.M."/>
            <person name="Chiu K.P."/>
            <person name="Choudhary V."/>
            <person name="Christoffels A."/>
            <person name="Clutterbuck D.R."/>
            <person name="Crowe M.L."/>
            <person name="Dalla E."/>
            <person name="Dalrymple B.P."/>
            <person name="de Bono B."/>
            <person name="Della Gatta G."/>
            <person name="di Bernardo D."/>
            <person name="Down T."/>
            <person name="Engstrom P."/>
            <person name="Fagiolini M."/>
            <person name="Faulkner G."/>
            <person name="Fletcher C.F."/>
            <person name="Fukushima T."/>
            <person name="Furuno M."/>
            <person name="Futaki S."/>
            <person name="Gariboldi M."/>
            <person name="Georgii-Hemming P."/>
            <person name="Gingeras T.R."/>
            <person name="Gojobori T."/>
            <person name="Green R.E."/>
            <person name="Gustincich S."/>
            <person name="Harbers M."/>
            <person name="Hayashi Y."/>
            <person name="Hensch T.K."/>
            <person name="Hirokawa N."/>
            <person name="Hill D."/>
            <person name="Huminiecki L."/>
            <person name="Iacono M."/>
            <person name="Ikeo K."/>
            <person name="Iwama A."/>
            <person name="Ishikawa T."/>
            <person name="Jakt M."/>
            <person name="Kanapin A."/>
            <person name="Katoh M."/>
            <person name="Kawasawa Y."/>
            <person name="Kelso J."/>
            <person name="Kitamura H."/>
            <person name="Kitano H."/>
            <person name="Kollias G."/>
            <person name="Krishnan S.P."/>
            <person name="Kruger A."/>
            <person name="Kummerfeld S.K."/>
            <person name="Kurochkin I.V."/>
            <person name="Lareau L.F."/>
            <person name="Lazarevic D."/>
            <person name="Lipovich L."/>
            <person name="Liu J."/>
            <person name="Liuni S."/>
            <person name="McWilliam S."/>
            <person name="Madan Babu M."/>
            <person name="Madera M."/>
            <person name="Marchionni L."/>
            <person name="Matsuda H."/>
            <person name="Matsuzawa S."/>
            <person name="Miki H."/>
            <person name="Mignone F."/>
            <person name="Miyake S."/>
            <person name="Morris K."/>
            <person name="Mottagui-Tabar S."/>
            <person name="Mulder N."/>
            <person name="Nakano N."/>
            <person name="Nakauchi H."/>
            <person name="Ng P."/>
            <person name="Nilsson R."/>
            <person name="Nishiguchi S."/>
            <person name="Nishikawa S."/>
            <person name="Nori F."/>
            <person name="Ohara O."/>
            <person name="Okazaki Y."/>
            <person name="Orlando V."/>
            <person name="Pang K.C."/>
            <person name="Pavan W.J."/>
            <person name="Pavesi G."/>
            <person name="Pesole G."/>
            <person name="Petrovsky N."/>
            <person name="Piazza S."/>
            <person name="Reed J."/>
            <person name="Reid J.F."/>
            <person name="Ring B.Z."/>
            <person name="Ringwald M."/>
            <person name="Rost B."/>
            <person name="Ruan Y."/>
            <person name="Salzberg S.L."/>
            <person name="Sandelin A."/>
            <person name="Schneider C."/>
            <person name="Schoenbach C."/>
            <person name="Sekiguchi K."/>
            <person name="Semple C.A."/>
            <person name="Seno S."/>
            <person name="Sessa L."/>
            <person name="Sheng Y."/>
            <person name="Shibata Y."/>
            <person name="Shimada H."/>
            <person name="Shimada K."/>
            <person name="Silva D."/>
            <person name="Sinclair B."/>
            <person name="Sperling S."/>
            <person name="Stupka E."/>
            <person name="Sugiura K."/>
            <person name="Sultana R."/>
            <person name="Takenaka Y."/>
            <person name="Taki K."/>
            <person name="Tammoja K."/>
            <person name="Tan S.L."/>
            <person name="Tang S."/>
            <person name="Taylor M.S."/>
            <person name="Tegner J."/>
            <person name="Teichmann S.A."/>
            <person name="Ueda H.R."/>
            <person name="van Nimwegen E."/>
            <person name="Verardo R."/>
            <person name="Wei C.L."/>
            <person name="Yagi K."/>
            <person name="Yamanishi H."/>
            <person name="Zabarovsky E."/>
            <person name="Zhu S."/>
            <person name="Zimmer A."/>
            <person name="Hide W."/>
            <person name="Bult C."/>
            <person name="Grimmond S.M."/>
            <person name="Teasdale R.D."/>
            <person name="Liu E.T."/>
            <person name="Brusic V."/>
            <person name="Quackenbush J."/>
            <person name="Wahlestedt C."/>
            <person name="Mattick J.S."/>
            <person name="Hume D.A."/>
            <person name="Kai C."/>
            <person name="Sasaki D."/>
            <person name="Tomaru Y."/>
            <person name="Fukuda S."/>
            <person name="Kanamori-Katayama M."/>
            <person name="Suzuki M."/>
            <person name="Aoki J."/>
            <person name="Arakawa T."/>
            <person name="Iida J."/>
            <person name="Imamura K."/>
            <person name="Itoh M."/>
            <person name="Kato T."/>
            <person name="Kawaji H."/>
            <person name="Kawagashira N."/>
            <person name="Kawashima T."/>
            <person name="Kojima M."/>
            <person name="Kondo S."/>
            <person name="Konno H."/>
            <person name="Nakano K."/>
            <person name="Ninomiya N."/>
            <person name="Nishio T."/>
            <person name="Okada M."/>
            <person name="Plessy C."/>
            <person name="Shibata K."/>
            <person name="Shiraki T."/>
            <person name="Suzuki S."/>
            <person name="Tagami M."/>
            <person name="Waki K."/>
            <person name="Watahiki A."/>
            <person name="Okamura-Oho Y."/>
            <person name="Suzuki H."/>
            <person name="Kawai J."/>
            <person name="Hayashizaki Y."/>
        </authorList>
    </citation>
    <scope>NUCLEOTIDE SEQUENCE [LARGE SCALE MRNA]</scope>
    <source>
        <strain>C57BL/6J</strain>
        <tissue>Head</tissue>
    </source>
</reference>
<reference key="4">
    <citation type="journal article" date="2009" name="PLoS Biol.">
        <title>Lineage-specific biology revealed by a finished genome assembly of the mouse.</title>
        <authorList>
            <person name="Church D.M."/>
            <person name="Goodstadt L."/>
            <person name="Hillier L.W."/>
            <person name="Zody M.C."/>
            <person name="Goldstein S."/>
            <person name="She X."/>
            <person name="Bult C.J."/>
            <person name="Agarwala R."/>
            <person name="Cherry J.L."/>
            <person name="DiCuccio M."/>
            <person name="Hlavina W."/>
            <person name="Kapustin Y."/>
            <person name="Meric P."/>
            <person name="Maglott D."/>
            <person name="Birtle Z."/>
            <person name="Marques A.C."/>
            <person name="Graves T."/>
            <person name="Zhou S."/>
            <person name="Teague B."/>
            <person name="Potamousis K."/>
            <person name="Churas C."/>
            <person name="Place M."/>
            <person name="Herschleb J."/>
            <person name="Runnheim R."/>
            <person name="Forrest D."/>
            <person name="Amos-Landgraf J."/>
            <person name="Schwartz D.C."/>
            <person name="Cheng Z."/>
            <person name="Lindblad-Toh K."/>
            <person name="Eichler E.E."/>
            <person name="Ponting C.P."/>
        </authorList>
    </citation>
    <scope>NUCLEOTIDE SEQUENCE [LARGE SCALE GENOMIC DNA]</scope>
    <source>
        <strain>C57BL/6J</strain>
    </source>
</reference>
<reference key="5">
    <citation type="journal article" date="1998" name="Genomics">
        <title>A combined analysis of genomic and primary protein structure defines the phylogenetic relationship of new members of the T-box family.</title>
        <authorList>
            <person name="Wattler S."/>
            <person name="Russ A."/>
            <person name="Evans M."/>
            <person name="Nehls M."/>
        </authorList>
    </citation>
    <scope>NUCLEOTIDE SEQUENCE [MRNA] OF 44-602</scope>
</reference>
<reference key="6">
    <citation type="journal article" date="2007" name="J. Biol. Chem.">
        <title>Transcriptional repression by the T-box proteins Tbx18 and Tbx15 depends on Groucho corepressors.</title>
        <authorList>
            <person name="Farin H.F."/>
            <person name="Bussen M."/>
            <person name="Schmidt M.K."/>
            <person name="Singh M.K."/>
            <person name="Schuster-Gossler K."/>
            <person name="Kispert A."/>
        </authorList>
    </citation>
    <scope>INTERACTION WITH TBX18</scope>
</reference>
<gene>
    <name type="primary">Tbx15</name>
    <name type="synonym">Tbx14</name>
    <name type="synonym">Tbx8</name>
</gene>
<proteinExistence type="evidence at protein level"/>